<organism>
    <name type="scientific">Cupriavidus pinatubonensis (strain JMP 134 / LMG 1197)</name>
    <name type="common">Cupriavidus necator (strain JMP 134)</name>
    <dbReference type="NCBI Taxonomy" id="264198"/>
    <lineage>
        <taxon>Bacteria</taxon>
        <taxon>Pseudomonadati</taxon>
        <taxon>Pseudomonadota</taxon>
        <taxon>Betaproteobacteria</taxon>
        <taxon>Burkholderiales</taxon>
        <taxon>Burkholderiaceae</taxon>
        <taxon>Cupriavidus</taxon>
    </lineage>
</organism>
<dbReference type="EMBL" id="CP000090">
    <property type="protein sequence ID" value="AAZ61609.1"/>
    <property type="molecule type" value="Genomic_DNA"/>
</dbReference>
<dbReference type="SMR" id="Q46Z24"/>
<dbReference type="STRING" id="264198.Reut_A2246"/>
<dbReference type="KEGG" id="reu:Reut_A2246"/>
<dbReference type="eggNOG" id="COG0231">
    <property type="taxonomic scope" value="Bacteria"/>
</dbReference>
<dbReference type="HOGENOM" id="CLU_074944_2_1_4"/>
<dbReference type="OrthoDB" id="9801844at2"/>
<dbReference type="UniPathway" id="UPA00345"/>
<dbReference type="GO" id="GO:0005737">
    <property type="term" value="C:cytoplasm"/>
    <property type="evidence" value="ECO:0007669"/>
    <property type="project" value="UniProtKB-SubCell"/>
</dbReference>
<dbReference type="GO" id="GO:0003746">
    <property type="term" value="F:translation elongation factor activity"/>
    <property type="evidence" value="ECO:0007669"/>
    <property type="project" value="UniProtKB-UniRule"/>
</dbReference>
<dbReference type="GO" id="GO:0043043">
    <property type="term" value="P:peptide biosynthetic process"/>
    <property type="evidence" value="ECO:0007669"/>
    <property type="project" value="InterPro"/>
</dbReference>
<dbReference type="CDD" id="cd04470">
    <property type="entry name" value="S1_EF-P_repeat_1"/>
    <property type="match status" value="1"/>
</dbReference>
<dbReference type="CDD" id="cd05794">
    <property type="entry name" value="S1_EF-P_repeat_2"/>
    <property type="match status" value="1"/>
</dbReference>
<dbReference type="FunFam" id="2.30.30.30:FF:000003">
    <property type="entry name" value="Elongation factor P"/>
    <property type="match status" value="1"/>
</dbReference>
<dbReference type="FunFam" id="2.40.50.140:FF:000004">
    <property type="entry name" value="Elongation factor P"/>
    <property type="match status" value="1"/>
</dbReference>
<dbReference type="FunFam" id="2.40.50.140:FF:000009">
    <property type="entry name" value="Elongation factor P"/>
    <property type="match status" value="1"/>
</dbReference>
<dbReference type="Gene3D" id="2.30.30.30">
    <property type="match status" value="1"/>
</dbReference>
<dbReference type="Gene3D" id="2.40.50.140">
    <property type="entry name" value="Nucleic acid-binding proteins"/>
    <property type="match status" value="2"/>
</dbReference>
<dbReference type="HAMAP" id="MF_00141">
    <property type="entry name" value="EF_P"/>
    <property type="match status" value="1"/>
</dbReference>
<dbReference type="InterPro" id="IPR015365">
    <property type="entry name" value="Elong-fact-P_C"/>
</dbReference>
<dbReference type="InterPro" id="IPR012340">
    <property type="entry name" value="NA-bd_OB-fold"/>
</dbReference>
<dbReference type="InterPro" id="IPR014722">
    <property type="entry name" value="Rib_uL2_dom2"/>
</dbReference>
<dbReference type="InterPro" id="IPR020599">
    <property type="entry name" value="Transl_elong_fac_P/YeiP"/>
</dbReference>
<dbReference type="InterPro" id="IPR013185">
    <property type="entry name" value="Transl_elong_KOW-like"/>
</dbReference>
<dbReference type="InterPro" id="IPR001059">
    <property type="entry name" value="Transl_elong_P/YeiP_cen"/>
</dbReference>
<dbReference type="InterPro" id="IPR013852">
    <property type="entry name" value="Transl_elong_P/YeiP_CS"/>
</dbReference>
<dbReference type="InterPro" id="IPR011768">
    <property type="entry name" value="Transl_elongation_fac_P"/>
</dbReference>
<dbReference type="InterPro" id="IPR008991">
    <property type="entry name" value="Translation_prot_SH3-like_sf"/>
</dbReference>
<dbReference type="NCBIfam" id="TIGR00038">
    <property type="entry name" value="efp"/>
    <property type="match status" value="1"/>
</dbReference>
<dbReference type="NCBIfam" id="NF001810">
    <property type="entry name" value="PRK00529.1"/>
    <property type="match status" value="1"/>
</dbReference>
<dbReference type="PANTHER" id="PTHR30053">
    <property type="entry name" value="ELONGATION FACTOR P"/>
    <property type="match status" value="1"/>
</dbReference>
<dbReference type="PANTHER" id="PTHR30053:SF12">
    <property type="entry name" value="ELONGATION FACTOR P (EF-P) FAMILY PROTEIN"/>
    <property type="match status" value="1"/>
</dbReference>
<dbReference type="Pfam" id="PF01132">
    <property type="entry name" value="EFP"/>
    <property type="match status" value="1"/>
</dbReference>
<dbReference type="Pfam" id="PF08207">
    <property type="entry name" value="EFP_N"/>
    <property type="match status" value="1"/>
</dbReference>
<dbReference type="Pfam" id="PF09285">
    <property type="entry name" value="Elong-fact-P_C"/>
    <property type="match status" value="1"/>
</dbReference>
<dbReference type="PIRSF" id="PIRSF005901">
    <property type="entry name" value="EF-P"/>
    <property type="match status" value="1"/>
</dbReference>
<dbReference type="SMART" id="SM01185">
    <property type="entry name" value="EFP"/>
    <property type="match status" value="1"/>
</dbReference>
<dbReference type="SMART" id="SM00841">
    <property type="entry name" value="Elong-fact-P_C"/>
    <property type="match status" value="1"/>
</dbReference>
<dbReference type="SUPFAM" id="SSF50249">
    <property type="entry name" value="Nucleic acid-binding proteins"/>
    <property type="match status" value="2"/>
</dbReference>
<dbReference type="SUPFAM" id="SSF50104">
    <property type="entry name" value="Translation proteins SH3-like domain"/>
    <property type="match status" value="1"/>
</dbReference>
<dbReference type="PROSITE" id="PS01275">
    <property type="entry name" value="EFP"/>
    <property type="match status" value="1"/>
</dbReference>
<sequence length="186" mass="20968">MKIAQELRVGNVFMMNGAPMVVQKAEYNKSGRNAAVVKMKYKNLLTEAPGESVFKADDKFEVVVLERRECTYSYFADPMYVFMDADYNQFEVEQDSMGDALNYLEDGMAVEVVFYNEKAISVEMPTTLVREIVYTEPAVKGDTSSGKVLKGAKINTGFELQVPLFCNIGDKIEIDTRTGEYRSRAN</sequence>
<protein>
    <recommendedName>
        <fullName evidence="1">Elongation factor P</fullName>
        <shortName evidence="1">EF-P</shortName>
    </recommendedName>
</protein>
<accession>Q46Z24</accession>
<reference key="1">
    <citation type="journal article" date="2010" name="PLoS ONE">
        <title>The complete multipartite genome sequence of Cupriavidus necator JMP134, a versatile pollutant degrader.</title>
        <authorList>
            <person name="Lykidis A."/>
            <person name="Perez-Pantoja D."/>
            <person name="Ledger T."/>
            <person name="Mavromatis K."/>
            <person name="Anderson I.J."/>
            <person name="Ivanova N.N."/>
            <person name="Hooper S.D."/>
            <person name="Lapidus A."/>
            <person name="Lucas S."/>
            <person name="Gonzalez B."/>
            <person name="Kyrpides N.C."/>
        </authorList>
    </citation>
    <scope>NUCLEOTIDE SEQUENCE [LARGE SCALE GENOMIC DNA]</scope>
    <source>
        <strain>JMP134 / LMG 1197</strain>
    </source>
</reference>
<gene>
    <name evidence="1" type="primary">efp</name>
    <name type="ordered locus">Reut_A2246</name>
</gene>
<name>EFP_CUPPJ</name>
<proteinExistence type="inferred from homology"/>
<comment type="function">
    <text evidence="1">Involved in peptide bond synthesis. Stimulates efficient translation and peptide-bond synthesis on native or reconstituted 70S ribosomes in vitro. Probably functions indirectly by altering the affinity of the ribosome for aminoacyl-tRNA, thus increasing their reactivity as acceptors for peptidyl transferase.</text>
</comment>
<comment type="pathway">
    <text evidence="1">Protein biosynthesis; polypeptide chain elongation.</text>
</comment>
<comment type="subcellular location">
    <subcellularLocation>
        <location evidence="1">Cytoplasm</location>
    </subcellularLocation>
</comment>
<comment type="similarity">
    <text evidence="1">Belongs to the elongation factor P family.</text>
</comment>
<feature type="chain" id="PRO_1000010824" description="Elongation factor P">
    <location>
        <begin position="1"/>
        <end position="186"/>
    </location>
</feature>
<evidence type="ECO:0000255" key="1">
    <source>
        <dbReference type="HAMAP-Rule" id="MF_00141"/>
    </source>
</evidence>
<keyword id="KW-0963">Cytoplasm</keyword>
<keyword id="KW-0251">Elongation factor</keyword>
<keyword id="KW-0648">Protein biosynthesis</keyword>